<reference key="1">
    <citation type="journal article" date="2010" name="J. Proteome Res.">
        <title>Molecular diversification of peptide toxins from the tarantula Haplopelma hainanum (Ornithoctonus hainana) venom based on transcriptomic, peptidomic, and genomic analyses.</title>
        <authorList>
            <person name="Tang X."/>
            <person name="Zhang Y."/>
            <person name="Hu W."/>
            <person name="Xu D."/>
            <person name="Tao H."/>
            <person name="Yang X."/>
            <person name="Li Y."/>
            <person name="Jiang L."/>
            <person name="Liang S."/>
        </authorList>
    </citation>
    <scope>NUCLEOTIDE SEQUENCE [LARGE SCALE MRNA]</scope>
    <source>
        <tissue>Venom gland</tissue>
    </source>
</reference>
<organism>
    <name type="scientific">Cyriopagopus hainanus</name>
    <name type="common">Chinese bird spider</name>
    <name type="synonym">Haplopelma hainanum</name>
    <dbReference type="NCBI Taxonomy" id="209901"/>
    <lineage>
        <taxon>Eukaryota</taxon>
        <taxon>Metazoa</taxon>
        <taxon>Ecdysozoa</taxon>
        <taxon>Arthropoda</taxon>
        <taxon>Chelicerata</taxon>
        <taxon>Arachnida</taxon>
        <taxon>Araneae</taxon>
        <taxon>Mygalomorphae</taxon>
        <taxon>Theraphosidae</taxon>
        <taxon>Haplopelma</taxon>
    </lineage>
</organism>
<sequence>MKVTLIAILTCAAVLVLHTTAAEELEAESQLMEVGMPDTELAAVDEERLFERSVSCEIEKEGNKDCKKKKCKGGWKCKFNMCVKV</sequence>
<keyword id="KW-1015">Disulfide bond</keyword>
<keyword id="KW-0528">Neurotoxin</keyword>
<keyword id="KW-0629">Postsynaptic neurotoxin</keyword>
<keyword id="KW-0964">Secreted</keyword>
<keyword id="KW-0732">Signal</keyword>
<keyword id="KW-0800">Toxin</keyword>
<protein>
    <recommendedName>
        <fullName>U4-theraphotoxin-Hhn1ab</fullName>
        <shortName>U4-TRTX-Hhn1ab</shortName>
    </recommendedName>
    <alternativeName>
        <fullName>Hainantoxin-II-5</fullName>
        <shortName>HNTX-II-5</shortName>
    </alternativeName>
</protein>
<evidence type="ECO:0000250" key="1"/>
<evidence type="ECO:0000255" key="2"/>
<evidence type="ECO:0000305" key="3"/>
<comment type="function">
    <text evidence="1">Postsynaptic neurotoxin.</text>
</comment>
<comment type="subcellular location">
    <subcellularLocation>
        <location evidence="1">Secreted</location>
    </subcellularLocation>
</comment>
<comment type="tissue specificity">
    <text>Expressed by the venom gland.</text>
</comment>
<comment type="similarity">
    <text evidence="3">Belongs to the neurotoxin 12 (Hwtx-2) family. 02 (Hwtx-2) subfamily.</text>
</comment>
<dbReference type="EMBL" id="GU292893">
    <property type="protein sequence ID" value="ADB56709.1"/>
    <property type="molecule type" value="mRNA"/>
</dbReference>
<dbReference type="SMR" id="D2Y216"/>
<dbReference type="ArachnoServer" id="AS001712">
    <property type="toxin name" value="U4-theraphotoxin-Hhn1ab"/>
</dbReference>
<dbReference type="GO" id="GO:0005576">
    <property type="term" value="C:extracellular region"/>
    <property type="evidence" value="ECO:0007669"/>
    <property type="project" value="UniProtKB-SubCell"/>
</dbReference>
<dbReference type="GO" id="GO:0035792">
    <property type="term" value="C:host cell postsynaptic membrane"/>
    <property type="evidence" value="ECO:0007669"/>
    <property type="project" value="UniProtKB-KW"/>
</dbReference>
<dbReference type="GO" id="GO:0090729">
    <property type="term" value="F:toxin activity"/>
    <property type="evidence" value="ECO:0007669"/>
    <property type="project" value="UniProtKB-KW"/>
</dbReference>
<dbReference type="InterPro" id="IPR012625">
    <property type="entry name" value="Hwtx-2-like"/>
</dbReference>
<dbReference type="Pfam" id="PF08089">
    <property type="entry name" value="Toxin_20"/>
    <property type="match status" value="1"/>
</dbReference>
<dbReference type="SUPFAM" id="SSF57059">
    <property type="entry name" value="omega toxin-like"/>
    <property type="match status" value="1"/>
</dbReference>
<feature type="signal peptide" evidence="2">
    <location>
        <begin position="1"/>
        <end position="22"/>
    </location>
</feature>
<feature type="propeptide" id="PRO_0000400773" evidence="1">
    <location>
        <begin position="23"/>
        <end position="48"/>
    </location>
</feature>
<feature type="peptide" id="PRO_0000400774" description="U4-theraphotoxin-Hhn1ab">
    <location>
        <begin position="49"/>
        <end position="85"/>
    </location>
</feature>
<feature type="disulfide bond" evidence="1">
    <location>
        <begin position="56"/>
        <end position="77"/>
    </location>
</feature>
<feature type="disulfide bond" evidence="1">
    <location>
        <begin position="71"/>
        <end position="82"/>
    </location>
</feature>
<proteinExistence type="evidence at transcript level"/>
<accession>D2Y216</accession>
<name>H2E01_CYRHA</name>